<keyword id="KW-0040">ANK repeat</keyword>
<keyword id="KW-0244">Early protein</keyword>
<keyword id="KW-1035">Host cytoplasm</keyword>
<keyword id="KW-1048">Host nucleus</keyword>
<keyword id="KW-0945">Host-virus interaction</keyword>
<keyword id="KW-1090">Inhibition of host innate immune response by virus</keyword>
<keyword id="KW-1100">Inhibition of host NF-kappa-B by virus</keyword>
<keyword id="KW-1185">Reference proteome</keyword>
<keyword id="KW-0677">Repeat</keyword>
<keyword id="KW-0899">Viral immunoevasion</keyword>
<feature type="chain" id="PRO_0000067081" description="Interferon antagonist OPG040">
    <location>
        <begin position="1"/>
        <end position="284"/>
    </location>
</feature>
<feature type="repeat" description="ANK 1">
    <location>
        <begin position="29"/>
        <end position="58"/>
    </location>
</feature>
<feature type="repeat" description="ANK 2">
    <location>
        <begin position="60"/>
        <end position="89"/>
    </location>
</feature>
<feature type="repeat" description="ANK 3">
    <location>
        <begin position="93"/>
        <end position="122"/>
    </location>
</feature>
<feature type="repeat" description="ANK 4">
    <location>
        <begin position="127"/>
        <end position="157"/>
    </location>
</feature>
<feature type="repeat" description="ANK 5">
    <location>
        <begin position="159"/>
        <end position="188"/>
    </location>
</feature>
<feature type="repeat" description="ANK 6">
    <location>
        <begin position="193"/>
        <end position="222"/>
    </location>
</feature>
<feature type="sequence conflict" description="In Ref. 1; AAA48299." evidence="6" ref="1">
    <original>A</original>
    <variation>T</variation>
    <location>
        <position position="23"/>
    </location>
</feature>
<feature type="sequence conflict" description="In Ref. 1; AAA48299." evidence="6" ref="1">
    <original>L</original>
    <variation>M</variation>
    <location>
        <position position="85"/>
    </location>
</feature>
<feature type="sequence conflict" description="In Ref. 1; AAA48299." evidence="6" ref="1">
    <original>I</original>
    <variation>T</variation>
    <location>
        <position position="166"/>
    </location>
</feature>
<feature type="sequence conflict" description="In Ref. 1; AAA48299." evidence="6" ref="1">
    <original>A</original>
    <variation>V</variation>
    <location>
        <position position="223"/>
    </location>
</feature>
<feature type="sequence conflict" description="In Ref. 1; AAA48299." evidence="6" ref="1">
    <original>A</original>
    <variation>T</variation>
    <location>
        <position position="236"/>
    </location>
</feature>
<feature type="sequence conflict" description="In Ref. 1; AAA48299." evidence="6" ref="1">
    <original>H</original>
    <variation>D</variation>
    <location>
        <position position="243"/>
    </location>
</feature>
<name>PG039_VACCW</name>
<comment type="function">
    <text evidence="1 2 3 5">Inhibits antiviral activity induced by type I interferons. Does not block signal transduction of IFN, but is important to counter the host antiviral state induced by a pre-treatment with IFN. Plays a role in the inhibition of host NF-kappa-B activation by preventing the acetylation of the RELA/p65 subunit of NF-kappaB.</text>
</comment>
<comment type="subcellular location">
    <subcellularLocation>
        <location evidence="5">Host cytoplasm</location>
    </subcellularLocation>
    <subcellularLocation>
        <location evidence="5">Host nucleus</location>
    </subcellularLocation>
</comment>
<comment type="induction">
    <text evidence="4">Expressed in the early phase of the viral replicative cycle.</text>
</comment>
<comment type="similarity">
    <text evidence="6">Belongs to the orthopoxvirus OPG039 family.</text>
</comment>
<organismHost>
    <name type="scientific">Bos taurus</name>
    <name type="common">Bovine</name>
    <dbReference type="NCBI Taxonomy" id="9913"/>
</organismHost>
<evidence type="ECO:0000269" key="1">
    <source>
    </source>
</evidence>
<evidence type="ECO:0000269" key="2">
    <source>
    </source>
</evidence>
<evidence type="ECO:0000269" key="3">
    <source>
    </source>
</evidence>
<evidence type="ECO:0000269" key="4">
    <source>
    </source>
</evidence>
<evidence type="ECO:0000269" key="5">
    <source>
    </source>
</evidence>
<evidence type="ECO:0000305" key="6"/>
<reference key="1">
    <citation type="journal article" date="1986" name="Proc. Natl. Acad. Sci. U.S.A.">
        <title>Localization and sequence of a vaccinia virus gene required for multiplication in human cells.</title>
        <authorList>
            <person name="Gillard S."/>
            <person name="Spehner D."/>
            <person name="Drillien R."/>
            <person name="Kirn A."/>
        </authorList>
    </citation>
    <scope>NUCLEOTIDE SEQUENCE [GENOMIC DNA]</scope>
</reference>
<reference key="2">
    <citation type="journal article" date="1989" name="Arch. Virol.">
        <title>Partial deletion of the human host range gene in the attenuated vaccinia virus MVA.</title>
        <authorList>
            <person name="Altenburger W."/>
            <person name="Suter C.P."/>
            <person name="Altenburger J."/>
        </authorList>
    </citation>
    <scope>NUCLEOTIDE SEQUENCE [GENOMIC DNA]</scope>
</reference>
<reference key="3">
    <citation type="submission" date="2003-02" db="EMBL/GenBank/DDBJ databases">
        <title>Sequencing of the coding region of Vaccinia-WR to an average 9-fold redundancy and an error rate of 0.16/10kb.</title>
        <authorList>
            <person name="Esposito J.J."/>
            <person name="Frace A.M."/>
            <person name="Sammons S.A."/>
            <person name="Olsen-Rasmussen M."/>
            <person name="Osborne J."/>
            <person name="Wohlhueter R."/>
        </authorList>
    </citation>
    <scope>NUCLEOTIDE SEQUENCE [LARGE SCALE GENOMIC DNA]</scope>
</reference>
<reference key="4">
    <citation type="journal article" date="1988" name="J. Gen. Virol.">
        <title>Non-essential genes in the vaccinia virus HindIII K fragment: a gene related to serine protease inhibitors and a gene related to the 37K vaccinia virus major envelope antigen.</title>
        <authorList>
            <person name="Boursnell M.E.G."/>
            <person name="Foulds I.J."/>
            <person name="Campbell J.I."/>
            <person name="Binns M.M."/>
        </authorList>
    </citation>
    <scope>NUCLEOTIDE SEQUENCE [GENOMIC DNA] OF 1-17</scope>
</reference>
<reference key="5">
    <citation type="journal article" date="2009" name="J. Virol.">
        <title>Vaccinia virus K1L and C7L inhibit antiviral activities induced by type I interferons.</title>
        <authorList>
            <person name="Meng X."/>
            <person name="Jiang C."/>
            <person name="Arsenio J."/>
            <person name="Dick K."/>
            <person name="Cao J."/>
            <person name="Xiang Y."/>
        </authorList>
    </citation>
    <scope>FUNCTION</scope>
</reference>
<reference key="6">
    <citation type="journal article" date="2010" name="J. Virol.">
        <title>Structure function studies of vaccinia virus host range protein k1 reveal a novel functional surface for ankyrin repeat proteins.</title>
        <authorList>
            <person name="Li Y."/>
            <person name="Meng X."/>
            <person name="Xiang Y."/>
            <person name="Deng J."/>
        </authorList>
    </citation>
    <scope>FUNCTION</scope>
</reference>
<reference key="7">
    <citation type="journal article" date="2011" name="J. Biol. Chem.">
        <title>Viral double-stranded RNAs from vaccinia virus early or intermediate gene transcripts possess PKR activating function, resulting in NF-kappaB activation, when the K1 protein is absent or mutated.</title>
        <authorList>
            <person name="Willis K.L."/>
            <person name="Langland J.O."/>
            <person name="Shisler J.L."/>
        </authorList>
    </citation>
    <scope>FUNCTION</scope>
</reference>
<reference key="8">
    <citation type="journal article" date="2016" name="J. Gen. Virol.">
        <title>Vaccinia virus K1 ankyrin repeat protein inhibits NF-kappaB activation by preventing RelA acetylation.</title>
        <authorList>
            <person name="Bravo Cruz A.G."/>
            <person name="Shisler J.L."/>
        </authorList>
    </citation>
    <scope>FUNCTION</scope>
    <scope>SUBCELLULAR LOCATION</scope>
</reference>
<reference key="9">
    <citation type="journal article" date="2015" name="J. Virol.">
        <title>Deciphering poxvirus gene expression by RNA sequencing and ribosome profiling.</title>
        <authorList>
            <person name="Yang Z."/>
            <person name="Cao S."/>
            <person name="Martens C.A."/>
            <person name="Porcella S.F."/>
            <person name="Xie Z."/>
            <person name="Ma M."/>
            <person name="Shen B."/>
            <person name="Moss B."/>
        </authorList>
    </citation>
    <scope>INDUCTION</scope>
</reference>
<accession>P04297</accession>
<accession>Q85352</accession>
<protein>
    <recommendedName>
        <fullName>Interferon antagonist OPG040</fullName>
    </recommendedName>
    <alternativeName>
        <fullName>32.5 kDa protein</fullName>
    </alternativeName>
    <alternativeName>
        <fullName>Host range protein 1</fullName>
    </alternativeName>
</protein>
<sequence>MDLSRINTWKSKQLKSFLSSKDAFKADVHGHSALYYAIADNNVRLVCTLLNAGALKNLLENEFPLHQAATLEDTKIVKILLFSGLDDSQFDDKGNTALYYAVDSGNMQTVKLFVKKNWRLMFYGKTGWKTSFYHAVMLNDVSIVSYFLSEIPSTFDLAILLSCIHITIKNGHVDMMILLLDYMTSTNTNNSLLFIPDIKLAIDNKDIEMLQALFKYDINIYSANLENVLLDDAEIAKMIIEKHVEYKSDSYTKDLDIVKNNKLDEIISKNKELRLMYVNCVKKN</sequence>
<proteinExistence type="evidence at transcript level"/>
<organism>
    <name type="scientific">Vaccinia virus (strain Western Reserve)</name>
    <name type="common">VACV</name>
    <name type="synonym">Vaccinia virus (strain WR)</name>
    <dbReference type="NCBI Taxonomy" id="10254"/>
    <lineage>
        <taxon>Viruses</taxon>
        <taxon>Varidnaviria</taxon>
        <taxon>Bamfordvirae</taxon>
        <taxon>Nucleocytoviricota</taxon>
        <taxon>Pokkesviricetes</taxon>
        <taxon>Chitovirales</taxon>
        <taxon>Poxviridae</taxon>
        <taxon>Chordopoxvirinae</taxon>
        <taxon>Orthopoxvirus</taxon>
        <taxon>Vaccinia virus</taxon>
    </lineage>
</organism>
<dbReference type="EMBL" id="D00382">
    <property type="protein sequence ID" value="BAA00286.1"/>
    <property type="molecule type" value="Genomic_DNA"/>
</dbReference>
<dbReference type="EMBL" id="AH003131">
    <property type="protein sequence ID" value="AAA69633.1"/>
    <property type="molecule type" value="Genomic_DNA"/>
</dbReference>
<dbReference type="EMBL" id="AY243312">
    <property type="protein sequence ID" value="AAO89311.1"/>
    <property type="molecule type" value="Genomic_DNA"/>
</dbReference>
<dbReference type="EMBL" id="M14319">
    <property type="protein sequence ID" value="AAA48299.1"/>
    <property type="molecule type" value="Genomic_DNA"/>
</dbReference>
<dbReference type="PIR" id="A03868">
    <property type="entry name" value="WMVZ32"/>
</dbReference>
<dbReference type="RefSeq" id="YP_232914.1">
    <property type="nucleotide sequence ID" value="NC_006998.1"/>
</dbReference>
<dbReference type="SMR" id="P04297"/>
<dbReference type="IntAct" id="P04297">
    <property type="interactions" value="3"/>
</dbReference>
<dbReference type="MINT" id="P04297"/>
<dbReference type="DNASU" id="3707647"/>
<dbReference type="GeneID" id="3707647"/>
<dbReference type="KEGG" id="vg:3707647"/>
<dbReference type="Proteomes" id="UP000000344">
    <property type="component" value="Genome"/>
</dbReference>
<dbReference type="GO" id="GO:0030430">
    <property type="term" value="C:host cell cytoplasm"/>
    <property type="evidence" value="ECO:0000314"/>
    <property type="project" value="UniProtKB"/>
</dbReference>
<dbReference type="GO" id="GO:0042025">
    <property type="term" value="C:host cell nucleus"/>
    <property type="evidence" value="ECO:0000314"/>
    <property type="project" value="UniProtKB"/>
</dbReference>
<dbReference type="GO" id="GO:0052170">
    <property type="term" value="P:symbiont-mediated suppression of host innate immune response"/>
    <property type="evidence" value="ECO:0007669"/>
    <property type="project" value="UniProtKB-KW"/>
</dbReference>
<dbReference type="GO" id="GO:0085034">
    <property type="term" value="P:symbiont-mediated suppression of host NF-kappaB cascade"/>
    <property type="evidence" value="ECO:0000314"/>
    <property type="project" value="UniProtKB"/>
</dbReference>
<dbReference type="FunFam" id="1.25.40.20:FF:000512">
    <property type="entry name" value="Interferon antagonist K1L"/>
    <property type="match status" value="1"/>
</dbReference>
<dbReference type="Gene3D" id="1.25.40.20">
    <property type="entry name" value="Ankyrin repeat-containing domain"/>
    <property type="match status" value="1"/>
</dbReference>
<dbReference type="InterPro" id="IPR002110">
    <property type="entry name" value="Ankyrin_rpt"/>
</dbReference>
<dbReference type="InterPro" id="IPR036770">
    <property type="entry name" value="Ankyrin_rpt-contain_sf"/>
</dbReference>
<dbReference type="PANTHER" id="PTHR24198">
    <property type="entry name" value="ANKYRIN REPEAT AND PROTEIN KINASE DOMAIN-CONTAINING PROTEIN"/>
    <property type="match status" value="1"/>
</dbReference>
<dbReference type="PANTHER" id="PTHR24198:SF165">
    <property type="entry name" value="ANKYRIN REPEAT-CONTAINING PROTEIN-RELATED"/>
    <property type="match status" value="1"/>
</dbReference>
<dbReference type="Pfam" id="PF12796">
    <property type="entry name" value="Ank_2"/>
    <property type="match status" value="1"/>
</dbReference>
<dbReference type="SMART" id="SM00248">
    <property type="entry name" value="ANK"/>
    <property type="match status" value="6"/>
</dbReference>
<dbReference type="SUPFAM" id="SSF48403">
    <property type="entry name" value="Ankyrin repeat"/>
    <property type="match status" value="1"/>
</dbReference>
<dbReference type="PROSITE" id="PS50297">
    <property type="entry name" value="ANK_REP_REGION"/>
    <property type="match status" value="1"/>
</dbReference>
<dbReference type="PROSITE" id="PS50088">
    <property type="entry name" value="ANK_REPEAT"/>
    <property type="match status" value="2"/>
</dbReference>
<gene>
    <name type="primary">OPG039</name>
    <name type="synonym">K1L</name>
    <name type="ORF">VACWR032</name>
</gene>